<dbReference type="EMBL" id="X94553">
    <property type="protein sequence ID" value="CAA64246.1"/>
    <property type="status" value="ALT_SEQ"/>
    <property type="molecule type" value="mRNA"/>
</dbReference>
<dbReference type="EMBL" id="U89995">
    <property type="protein sequence ID" value="AAC51294.1"/>
    <property type="molecule type" value="mRNA"/>
</dbReference>
<dbReference type="EMBL" id="Y13386">
    <property type="protein sequence ID" value="CAA73816.1"/>
    <property type="molecule type" value="Genomic_DNA"/>
</dbReference>
<dbReference type="EMBL" id="AL499604">
    <property type="status" value="NOT_ANNOTATED_CDS"/>
    <property type="molecule type" value="Genomic_DNA"/>
</dbReference>
<dbReference type="EMBL" id="CH471105">
    <property type="protein sequence ID" value="EAW58856.1"/>
    <property type="molecule type" value="Genomic_DNA"/>
</dbReference>
<dbReference type="CCDS" id="CCDS35078.1"/>
<dbReference type="RefSeq" id="NP_004464.2">
    <property type="nucleotide sequence ID" value="NM_004473.3"/>
</dbReference>
<dbReference type="SMR" id="O00358"/>
<dbReference type="BioGRID" id="108593">
    <property type="interactions" value="105"/>
</dbReference>
<dbReference type="FunCoup" id="O00358">
    <property type="interactions" value="294"/>
</dbReference>
<dbReference type="IntAct" id="O00358">
    <property type="interactions" value="87"/>
</dbReference>
<dbReference type="MINT" id="O00358"/>
<dbReference type="STRING" id="9606.ENSP00000364265"/>
<dbReference type="iPTMnet" id="O00358"/>
<dbReference type="PhosphoSitePlus" id="O00358"/>
<dbReference type="BioMuta" id="FOXE1"/>
<dbReference type="jPOST" id="O00358"/>
<dbReference type="MassIVE" id="O00358"/>
<dbReference type="PaxDb" id="9606-ENSP00000364265"/>
<dbReference type="PeptideAtlas" id="O00358"/>
<dbReference type="ProteomicsDB" id="47861"/>
<dbReference type="Pumba" id="O00358"/>
<dbReference type="Antibodypedia" id="28896">
    <property type="antibodies" value="262 antibodies from 33 providers"/>
</dbReference>
<dbReference type="DNASU" id="2304"/>
<dbReference type="Ensembl" id="ENST00000375123.5">
    <property type="protein sequence ID" value="ENSP00000364265.3"/>
    <property type="gene ID" value="ENSG00000178919.9"/>
</dbReference>
<dbReference type="GeneID" id="2304"/>
<dbReference type="KEGG" id="hsa:2304"/>
<dbReference type="MANE-Select" id="ENST00000375123.5">
    <property type="protein sequence ID" value="ENSP00000364265.3"/>
    <property type="RefSeq nucleotide sequence ID" value="NM_004473.4"/>
    <property type="RefSeq protein sequence ID" value="NP_004464.2"/>
</dbReference>
<dbReference type="UCSC" id="uc004axu.4">
    <property type="organism name" value="human"/>
</dbReference>
<dbReference type="AGR" id="HGNC:3806"/>
<dbReference type="CTD" id="2304"/>
<dbReference type="DisGeNET" id="2304"/>
<dbReference type="GeneCards" id="FOXE1"/>
<dbReference type="HGNC" id="HGNC:3806">
    <property type="gene designation" value="FOXE1"/>
</dbReference>
<dbReference type="HPA" id="ENSG00000178919">
    <property type="expression patterns" value="Tissue enriched (thyroid)"/>
</dbReference>
<dbReference type="MalaCards" id="FOXE1"/>
<dbReference type="MIM" id="241850">
    <property type="type" value="phenotype"/>
</dbReference>
<dbReference type="MIM" id="602617">
    <property type="type" value="gene"/>
</dbReference>
<dbReference type="MIM" id="616534">
    <property type="type" value="phenotype"/>
</dbReference>
<dbReference type="neXtProt" id="NX_O00358"/>
<dbReference type="OpenTargets" id="ENSG00000178919"/>
<dbReference type="Orphanet" id="95713">
    <property type="disease" value="Athyreosis"/>
</dbReference>
<dbReference type="Orphanet" id="1226">
    <property type="disease" value="Bamforth-Lazarus syndrome"/>
</dbReference>
<dbReference type="Orphanet" id="146">
    <property type="disease" value="Differentiated thyroid carcinoma"/>
</dbReference>
<dbReference type="Orphanet" id="319487">
    <property type="disease" value="Familial papillary or follicular thyroid carcinoma"/>
</dbReference>
<dbReference type="PharmGKB" id="PA28223"/>
<dbReference type="VEuPathDB" id="HostDB:ENSG00000178919"/>
<dbReference type="eggNOG" id="KOG2294">
    <property type="taxonomic scope" value="Eukaryota"/>
</dbReference>
<dbReference type="GeneTree" id="ENSGT00940000162270"/>
<dbReference type="HOGENOM" id="CLU_023357_0_1_1"/>
<dbReference type="InParanoid" id="O00358"/>
<dbReference type="OMA" id="HETPVFS"/>
<dbReference type="OrthoDB" id="5402974at2759"/>
<dbReference type="PAN-GO" id="O00358">
    <property type="GO annotations" value="5 GO annotations based on evolutionary models"/>
</dbReference>
<dbReference type="PhylomeDB" id="O00358"/>
<dbReference type="TreeFam" id="TF316127"/>
<dbReference type="PathwayCommons" id="O00358"/>
<dbReference type="SignaLink" id="O00358"/>
<dbReference type="SIGNOR" id="O00358"/>
<dbReference type="BioGRID-ORCS" id="2304">
    <property type="hits" value="21 hits in 1173 CRISPR screens"/>
</dbReference>
<dbReference type="ChiTaRS" id="FOXE1">
    <property type="organism name" value="human"/>
</dbReference>
<dbReference type="GeneWiki" id="FOXE1"/>
<dbReference type="GenomeRNAi" id="2304"/>
<dbReference type="Pharos" id="O00358">
    <property type="development level" value="Tbio"/>
</dbReference>
<dbReference type="PRO" id="PR:O00358"/>
<dbReference type="Proteomes" id="UP000005640">
    <property type="component" value="Chromosome 9"/>
</dbReference>
<dbReference type="RNAct" id="O00358">
    <property type="molecule type" value="protein"/>
</dbReference>
<dbReference type="Bgee" id="ENSG00000178919">
    <property type="expression patterns" value="Expressed in right lobe of thyroid gland and 74 other cell types or tissues"/>
</dbReference>
<dbReference type="GO" id="GO:0000785">
    <property type="term" value="C:chromatin"/>
    <property type="evidence" value="ECO:0000247"/>
    <property type="project" value="NTNU_SB"/>
</dbReference>
<dbReference type="GO" id="GO:0005634">
    <property type="term" value="C:nucleus"/>
    <property type="evidence" value="ECO:0000314"/>
    <property type="project" value="UniProtKB"/>
</dbReference>
<dbReference type="GO" id="GO:0003700">
    <property type="term" value="F:DNA-binding transcription factor activity"/>
    <property type="evidence" value="ECO:0000314"/>
    <property type="project" value="UniProtKB"/>
</dbReference>
<dbReference type="GO" id="GO:0000981">
    <property type="term" value="F:DNA-binding transcription factor activity, RNA polymerase II-specific"/>
    <property type="evidence" value="ECO:0000314"/>
    <property type="project" value="UniProtKB"/>
</dbReference>
<dbReference type="GO" id="GO:0000978">
    <property type="term" value="F:RNA polymerase II cis-regulatory region sequence-specific DNA binding"/>
    <property type="evidence" value="ECO:0000318"/>
    <property type="project" value="GO_Central"/>
</dbReference>
<dbReference type="GO" id="GO:0043565">
    <property type="term" value="F:sequence-specific DNA binding"/>
    <property type="evidence" value="ECO:0000314"/>
    <property type="project" value="UniProtKB"/>
</dbReference>
<dbReference type="GO" id="GO:1990837">
    <property type="term" value="F:sequence-specific double-stranded DNA binding"/>
    <property type="evidence" value="ECO:0000314"/>
    <property type="project" value="ARUK-UCL"/>
</dbReference>
<dbReference type="GO" id="GO:0009653">
    <property type="term" value="P:anatomical structure morphogenesis"/>
    <property type="evidence" value="ECO:0000318"/>
    <property type="project" value="GO_Central"/>
</dbReference>
<dbReference type="GO" id="GO:0030154">
    <property type="term" value="P:cell differentiation"/>
    <property type="evidence" value="ECO:0000318"/>
    <property type="project" value="GO_Central"/>
</dbReference>
<dbReference type="GO" id="GO:0016477">
    <property type="term" value="P:cell migration"/>
    <property type="evidence" value="ECO:0000250"/>
    <property type="project" value="UniProtKB"/>
</dbReference>
<dbReference type="GO" id="GO:0160093">
    <property type="term" value="P:chordate pharynx development"/>
    <property type="evidence" value="ECO:0000270"/>
    <property type="project" value="UniProtKB"/>
</dbReference>
<dbReference type="GO" id="GO:1904888">
    <property type="term" value="P:cranial skeletal system development"/>
    <property type="evidence" value="ECO:0007669"/>
    <property type="project" value="Ensembl"/>
</dbReference>
<dbReference type="GO" id="GO:0048562">
    <property type="term" value="P:embryonic organ morphogenesis"/>
    <property type="evidence" value="ECO:0000250"/>
    <property type="project" value="UniProtKB"/>
</dbReference>
<dbReference type="GO" id="GO:0031069">
    <property type="term" value="P:hair follicle morphogenesis"/>
    <property type="evidence" value="ECO:0000250"/>
    <property type="project" value="UniProtKB"/>
</dbReference>
<dbReference type="GO" id="GO:0060022">
    <property type="term" value="P:hard palate development"/>
    <property type="evidence" value="ECO:0000315"/>
    <property type="project" value="UniProtKB"/>
</dbReference>
<dbReference type="GO" id="GO:0045892">
    <property type="term" value="P:negative regulation of DNA-templated transcription"/>
    <property type="evidence" value="ECO:0000250"/>
    <property type="project" value="UniProtKB"/>
</dbReference>
<dbReference type="GO" id="GO:0000122">
    <property type="term" value="P:negative regulation of transcription by RNA polymerase II"/>
    <property type="evidence" value="ECO:0000250"/>
    <property type="project" value="UniProtKB"/>
</dbReference>
<dbReference type="GO" id="GO:0045893">
    <property type="term" value="P:positive regulation of DNA-templated transcription"/>
    <property type="evidence" value="ECO:0000314"/>
    <property type="project" value="UniProtKB"/>
</dbReference>
<dbReference type="GO" id="GO:0006357">
    <property type="term" value="P:regulation of transcription by RNA polymerase II"/>
    <property type="evidence" value="ECO:0000314"/>
    <property type="project" value="UniProtKB"/>
</dbReference>
<dbReference type="GO" id="GO:0060023">
    <property type="term" value="P:soft palate development"/>
    <property type="evidence" value="ECO:0000315"/>
    <property type="project" value="UniProtKB"/>
</dbReference>
<dbReference type="GO" id="GO:0048538">
    <property type="term" value="P:thymus development"/>
    <property type="evidence" value="ECO:0000270"/>
    <property type="project" value="UniProtKB"/>
</dbReference>
<dbReference type="GO" id="GO:0030878">
    <property type="term" value="P:thyroid gland development"/>
    <property type="evidence" value="ECO:0000315"/>
    <property type="project" value="UniProtKB"/>
</dbReference>
<dbReference type="GO" id="GO:0006590">
    <property type="term" value="P:thyroid hormone generation"/>
    <property type="evidence" value="ECO:0000250"/>
    <property type="project" value="UniProtKB"/>
</dbReference>
<dbReference type="CDD" id="cd20019">
    <property type="entry name" value="FH_FOXE"/>
    <property type="match status" value="1"/>
</dbReference>
<dbReference type="FunFam" id="1.10.10.10:FF:000201">
    <property type="entry name" value="Forkhead box E1"/>
    <property type="match status" value="1"/>
</dbReference>
<dbReference type="Gene3D" id="1.10.10.10">
    <property type="entry name" value="Winged helix-like DNA-binding domain superfamily/Winged helix DNA-binding domain"/>
    <property type="match status" value="1"/>
</dbReference>
<dbReference type="InterPro" id="IPR001766">
    <property type="entry name" value="Fork_head_dom"/>
</dbReference>
<dbReference type="InterPro" id="IPR050211">
    <property type="entry name" value="FOX_domain-containing"/>
</dbReference>
<dbReference type="InterPro" id="IPR018122">
    <property type="entry name" value="TF_fork_head_CS_1"/>
</dbReference>
<dbReference type="InterPro" id="IPR030456">
    <property type="entry name" value="TF_fork_head_CS_2"/>
</dbReference>
<dbReference type="InterPro" id="IPR036388">
    <property type="entry name" value="WH-like_DNA-bd_sf"/>
</dbReference>
<dbReference type="InterPro" id="IPR036390">
    <property type="entry name" value="WH_DNA-bd_sf"/>
</dbReference>
<dbReference type="PANTHER" id="PTHR11829">
    <property type="entry name" value="FORKHEAD BOX PROTEIN"/>
    <property type="match status" value="1"/>
</dbReference>
<dbReference type="PANTHER" id="PTHR11829:SF368">
    <property type="entry name" value="FORKHEAD BOX PROTEIN E1"/>
    <property type="match status" value="1"/>
</dbReference>
<dbReference type="Pfam" id="PF00250">
    <property type="entry name" value="Forkhead"/>
    <property type="match status" value="1"/>
</dbReference>
<dbReference type="PRINTS" id="PR00053">
    <property type="entry name" value="FORKHEAD"/>
</dbReference>
<dbReference type="SMART" id="SM00339">
    <property type="entry name" value="FH"/>
    <property type="match status" value="1"/>
</dbReference>
<dbReference type="SUPFAM" id="SSF46785">
    <property type="entry name" value="Winged helix' DNA-binding domain"/>
    <property type="match status" value="1"/>
</dbReference>
<dbReference type="PROSITE" id="PS00657">
    <property type="entry name" value="FORK_HEAD_1"/>
    <property type="match status" value="1"/>
</dbReference>
<dbReference type="PROSITE" id="PS00658">
    <property type="entry name" value="FORK_HEAD_2"/>
    <property type="match status" value="1"/>
</dbReference>
<dbReference type="PROSITE" id="PS50039">
    <property type="entry name" value="FORK_HEAD_3"/>
    <property type="match status" value="1"/>
</dbReference>
<feature type="chain" id="PRO_0000091826" description="Forkhead box protein E1">
    <location>
        <begin position="1"/>
        <end position="373"/>
    </location>
</feature>
<feature type="DNA-binding region" description="Fork-head" evidence="2">
    <location>
        <begin position="53"/>
        <end position="147"/>
    </location>
</feature>
<feature type="region of interest" description="Disordered" evidence="3">
    <location>
        <begin position="19"/>
        <end position="51"/>
    </location>
</feature>
<feature type="compositionally biased region" description="Basic residues" evidence="3">
    <location>
        <begin position="41"/>
        <end position="50"/>
    </location>
</feature>
<feature type="sequence variant" id="VAR_016882" description="In BAMLAZ; without choanal atresia; no effect on protein abundance; no effect on localization to the nucleus; decreased sequence-specific DNA binding; decreased transcriptional activity; dbSNP:rs28937575." evidence="4 8">
    <original>S</original>
    <variation>N</variation>
    <location>
        <position position="57"/>
    </location>
</feature>
<feature type="sequence variant" id="VAR_008857" description="In BAMLAZ; loss of sequence-specific DNA binding; loss of transcriptional activity; dbSNP:rs104894110." evidence="4 8 11">
    <original>A</original>
    <variation>V</variation>
    <location>
        <position position="65"/>
    </location>
</feature>
<feature type="sequence variant" id="VAR_075978" description="In BAMLAZ; no effect on protein abundance; no effect on sequence-specific DNA binding; enhances transcriptional activity toward TG and TPO genes." evidence="9">
    <original>R</original>
    <variation>S</variation>
    <location>
        <position position="73"/>
    </location>
</feature>
<feature type="sequence variant" id="VAR_027508" description="In congenital hypothyroidism; with absence of thyroid agenesis; loss of sequence-specific DNA binding; loss of transcriptional activity; dbSNP:rs104894111." evidence="5 8">
    <original>R</original>
    <variation>C</variation>
    <location>
        <position position="102"/>
    </location>
</feature>
<feature type="sequence variant" id="VAR_075979" description="In congenital hypothyroidism; slightly decreased sequence-specific DNA binding to the TPO promoter; 0.5 fold decreased transcriptional activity; dbSNP:rs762041111." evidence="6">
    <original>N</original>
    <variation>D</variation>
    <location>
        <position position="132"/>
    </location>
</feature>
<feature type="sequence variant" id="VAR_075980" description="In congenital hypothyroidism; loss of sequence-specific DNA binding; loss of transcriptional activity." evidence="7 8">
    <original>F</original>
    <variation>S</variation>
    <location>
        <position position="137"/>
    </location>
</feature>
<feature type="sequence variant" id="VAR_037643">
    <original>A</original>
    <variation>AAA</variation>
    <location>
        <position position="179"/>
    </location>
</feature>
<feature type="sequence variant" id="VAR_075981" description="In NMTC4; increased cell growth; increased cell migration; dbSNP:rs538912281." evidence="10">
    <original>A</original>
    <variation>G</variation>
    <location>
        <position position="248"/>
    </location>
</feature>
<organism>
    <name type="scientific">Homo sapiens</name>
    <name type="common">Human</name>
    <dbReference type="NCBI Taxonomy" id="9606"/>
    <lineage>
        <taxon>Eukaryota</taxon>
        <taxon>Metazoa</taxon>
        <taxon>Chordata</taxon>
        <taxon>Craniata</taxon>
        <taxon>Vertebrata</taxon>
        <taxon>Euteleostomi</taxon>
        <taxon>Mammalia</taxon>
        <taxon>Eutheria</taxon>
        <taxon>Euarchontoglires</taxon>
        <taxon>Primates</taxon>
        <taxon>Haplorrhini</taxon>
        <taxon>Catarrhini</taxon>
        <taxon>Hominidae</taxon>
        <taxon>Homo</taxon>
    </lineage>
</organism>
<comment type="function">
    <text evidence="4 5 6 7 8 9 10 11">Transcription factor that binds consensus sites on a variety of gene promoters and activate their transcription. Involved in proper palate formation, most probably through the expression of MSX1 and TGFB3 genes which are direct targets of this transcription factor. Also implicated in thyroid gland morphogenesis. May indirectly play a role in cell growth and migration through the regulation of WNT5A expression.</text>
</comment>
<comment type="interaction">
    <interactant intactId="EBI-11317834">
        <id>O00358</id>
    </interactant>
    <interactant intactId="EBI-726632">
        <id>P19419</id>
        <label>ELK1</label>
    </interactant>
    <organismsDiffer>false</organismsDiffer>
    <experiments>8</experiments>
</comment>
<comment type="subcellular location">
    <subcellularLocation>
        <location evidence="8">Nucleus</location>
    </subcellularLocation>
</comment>
<comment type="tissue specificity">
    <text>Detected in adult brain, placenta, lung, liver, skeletal muscle, kidney, pancreas, heart, colon, small intestine testis and thymus. Expression was strongest in heart and pancreas.</text>
</comment>
<comment type="PTM">
    <text evidence="1">Phosphorylated.</text>
</comment>
<comment type="polymorphism">
    <text>An alanine stretch that varies from 12 to 19 residues is present. This polymorphisms can be used as a marker to study the role of FOXE1 in other cases of thyroid dysgenesis, especially in familial cases.</text>
</comment>
<comment type="disease" evidence="4 8 9 11">
    <disease id="DI-01267">
        <name>Bamforth-Lazarus syndrome</name>
        <acronym>BAMLAZ</acronym>
        <description>An autosomal recessive disease characterized by congenital hypothyroidism due to thyroid agenesis or thyroid hypoplasia, cleft palate, spiky hair, with or without choanal atresia, and bifid epiglottis.</description>
        <dbReference type="MIM" id="241850"/>
    </disease>
    <text>The disease is caused by variants affecting the gene represented in this entry.</text>
</comment>
<comment type="disease" evidence="10">
    <disease id="DI-04530">
        <name>Thyroid cancer, non-medullary, 4</name>
        <acronym>NMTC4</acronym>
        <description>A form of non-medullary thyroid cancer (NMTC), a cancer characterized by tumors originating from the thyroid follicular cells. NMTCs represent approximately 95% of all cases of thyroid cancer and are classified into papillary, follicular, Hurthle cell, and anaplastic neoplasms.</description>
        <dbReference type="MIM" id="616534"/>
    </disease>
    <text>Disease susceptibility is associated with variants affecting the gene represented in this entry.</text>
</comment>
<comment type="sequence caution" evidence="12">
    <conflict type="miscellaneous discrepancy">
        <sequence resource="EMBL-CDS" id="CAA64246"/>
    </conflict>
    <text>Several conflicts.</text>
</comment>
<comment type="online information" name="Atlas of Genetics and Cytogenetics in Oncology and Haematology">
    <link uri="https://atlasgeneticsoncology.org/gene/47197/FOXE1"/>
</comment>
<gene>
    <name type="primary">FOXE1</name>
    <name type="synonym">FKHL15</name>
    <name type="synonym">FOXE2</name>
    <name type="synonym">TITF2</name>
    <name type="synonym">TTF2</name>
</gene>
<name>FOXE1_HUMAN</name>
<evidence type="ECO:0000250" key="1"/>
<evidence type="ECO:0000255" key="2">
    <source>
        <dbReference type="PROSITE-ProRule" id="PRU00089"/>
    </source>
</evidence>
<evidence type="ECO:0000256" key="3">
    <source>
        <dbReference type="SAM" id="MobiDB-lite"/>
    </source>
</evidence>
<evidence type="ECO:0000269" key="4">
    <source>
    </source>
</evidence>
<evidence type="ECO:0000269" key="5">
    <source>
    </source>
</evidence>
<evidence type="ECO:0000269" key="6">
    <source>
    </source>
</evidence>
<evidence type="ECO:0000269" key="7">
    <source>
    </source>
</evidence>
<evidence type="ECO:0000269" key="8">
    <source>
    </source>
</evidence>
<evidence type="ECO:0000269" key="9">
    <source>
    </source>
</evidence>
<evidence type="ECO:0000269" key="10">
    <source>
    </source>
</evidence>
<evidence type="ECO:0000269" key="11">
    <source>
    </source>
</evidence>
<evidence type="ECO:0000305" key="12"/>
<accession>O00358</accession>
<accession>O75765</accession>
<accession>Q5T109</accession>
<accession>Q99526</accession>
<protein>
    <recommendedName>
        <fullName>Forkhead box protein E1</fullName>
    </recommendedName>
    <alternativeName>
        <fullName>Forkhead box protein E2</fullName>
    </alternativeName>
    <alternativeName>
        <fullName>Forkhead-related protein FKHL15</fullName>
    </alternativeName>
    <alternativeName>
        <fullName>HFKH4</fullName>
    </alternativeName>
    <alternativeName>
        <fullName>HNF-3/fork head-like protein 5</fullName>
        <shortName>HFKL5</shortName>
    </alternativeName>
    <alternativeName>
        <fullName>Thyroid transcription factor 2</fullName>
        <shortName>TTF-2</shortName>
    </alternativeName>
</protein>
<reference key="1">
    <citation type="journal article" date="1997" name="DNA Cell Biol.">
        <title>The novel human HNF-3/fork head-like 5 gene: chromosomal localization and expression pattern.</title>
        <authorList>
            <person name="Wiese S."/>
            <person name="Emmerich D."/>
            <person name="Schroeder B."/>
            <person name="Murphy D.B."/>
            <person name="Grzeschik K.H."/>
            <person name="Van Kessel A.G."/>
            <person name="Thies U."/>
        </authorList>
    </citation>
    <scope>PRELIMINARY NUCLEOTIDE SEQUENCE [MRNA]</scope>
    <source>
        <tissue>Fetal brain</tissue>
    </source>
</reference>
<reference key="2">
    <citation type="journal article" date="1997" name="Genomics">
        <title>FKHL15, a new human member of the forkhead gene family located on chromosome 9q22.</title>
        <authorList>
            <person name="Chadwick B.P."/>
            <person name="Obermayr F."/>
            <person name="Frischauf A.-M."/>
        </authorList>
    </citation>
    <scope>NUCLEOTIDE SEQUENCE [MRNA]</scope>
    <scope>POLYMORPHISM OF POLY-ALA REGION</scope>
    <source>
        <tissue>Keratinocyte</tissue>
    </source>
</reference>
<reference key="3">
    <citation type="journal article" date="1999" name="Biochimie">
        <title>Cloning, chromosomal localization and identification of polymorphisms in the human thyroid transcription factor 2 gene (TITF2).</title>
        <authorList>
            <person name="Macchia P.E."/>
            <person name="Mattei M.-G."/>
            <person name="Lapi P."/>
            <person name="Fenzi G."/>
            <person name="Di Lauro R."/>
        </authorList>
    </citation>
    <scope>NUCLEOTIDE SEQUENCE [GENOMIC DNA]</scope>
    <scope>POLYMORPHISM</scope>
</reference>
<reference key="4">
    <citation type="journal article" date="2004" name="Nature">
        <title>DNA sequence and analysis of human chromosome 9.</title>
        <authorList>
            <person name="Humphray S.J."/>
            <person name="Oliver K."/>
            <person name="Hunt A.R."/>
            <person name="Plumb R.W."/>
            <person name="Loveland J.E."/>
            <person name="Howe K.L."/>
            <person name="Andrews T.D."/>
            <person name="Searle S."/>
            <person name="Hunt S.E."/>
            <person name="Scott C.E."/>
            <person name="Jones M.C."/>
            <person name="Ainscough R."/>
            <person name="Almeida J.P."/>
            <person name="Ambrose K.D."/>
            <person name="Ashwell R.I.S."/>
            <person name="Babbage A.K."/>
            <person name="Babbage S."/>
            <person name="Bagguley C.L."/>
            <person name="Bailey J."/>
            <person name="Banerjee R."/>
            <person name="Barker D.J."/>
            <person name="Barlow K.F."/>
            <person name="Bates K."/>
            <person name="Beasley H."/>
            <person name="Beasley O."/>
            <person name="Bird C.P."/>
            <person name="Bray-Allen S."/>
            <person name="Brown A.J."/>
            <person name="Brown J.Y."/>
            <person name="Burford D."/>
            <person name="Burrill W."/>
            <person name="Burton J."/>
            <person name="Carder C."/>
            <person name="Carter N.P."/>
            <person name="Chapman J.C."/>
            <person name="Chen Y."/>
            <person name="Clarke G."/>
            <person name="Clark S.Y."/>
            <person name="Clee C.M."/>
            <person name="Clegg S."/>
            <person name="Collier R.E."/>
            <person name="Corby N."/>
            <person name="Crosier M."/>
            <person name="Cummings A.T."/>
            <person name="Davies J."/>
            <person name="Dhami P."/>
            <person name="Dunn M."/>
            <person name="Dutta I."/>
            <person name="Dyer L.W."/>
            <person name="Earthrowl M.E."/>
            <person name="Faulkner L."/>
            <person name="Fleming C.J."/>
            <person name="Frankish A."/>
            <person name="Frankland J.A."/>
            <person name="French L."/>
            <person name="Fricker D.G."/>
            <person name="Garner P."/>
            <person name="Garnett J."/>
            <person name="Ghori J."/>
            <person name="Gilbert J.G.R."/>
            <person name="Glison C."/>
            <person name="Grafham D.V."/>
            <person name="Gribble S."/>
            <person name="Griffiths C."/>
            <person name="Griffiths-Jones S."/>
            <person name="Grocock R."/>
            <person name="Guy J."/>
            <person name="Hall R.E."/>
            <person name="Hammond S."/>
            <person name="Harley J.L."/>
            <person name="Harrison E.S.I."/>
            <person name="Hart E.A."/>
            <person name="Heath P.D."/>
            <person name="Henderson C.D."/>
            <person name="Hopkins B.L."/>
            <person name="Howard P.J."/>
            <person name="Howden P.J."/>
            <person name="Huckle E."/>
            <person name="Johnson C."/>
            <person name="Johnson D."/>
            <person name="Joy A.A."/>
            <person name="Kay M."/>
            <person name="Keenan S."/>
            <person name="Kershaw J.K."/>
            <person name="Kimberley A.M."/>
            <person name="King A."/>
            <person name="Knights A."/>
            <person name="Laird G.K."/>
            <person name="Langford C."/>
            <person name="Lawlor S."/>
            <person name="Leongamornlert D.A."/>
            <person name="Leversha M."/>
            <person name="Lloyd C."/>
            <person name="Lloyd D.M."/>
            <person name="Lovell J."/>
            <person name="Martin S."/>
            <person name="Mashreghi-Mohammadi M."/>
            <person name="Matthews L."/>
            <person name="McLaren S."/>
            <person name="McLay K.E."/>
            <person name="McMurray A."/>
            <person name="Milne S."/>
            <person name="Nickerson T."/>
            <person name="Nisbett J."/>
            <person name="Nordsiek G."/>
            <person name="Pearce A.V."/>
            <person name="Peck A.I."/>
            <person name="Porter K.M."/>
            <person name="Pandian R."/>
            <person name="Pelan S."/>
            <person name="Phillimore B."/>
            <person name="Povey S."/>
            <person name="Ramsey Y."/>
            <person name="Rand V."/>
            <person name="Scharfe M."/>
            <person name="Sehra H.K."/>
            <person name="Shownkeen R."/>
            <person name="Sims S.K."/>
            <person name="Skuce C.D."/>
            <person name="Smith M."/>
            <person name="Steward C.A."/>
            <person name="Swarbreck D."/>
            <person name="Sycamore N."/>
            <person name="Tester J."/>
            <person name="Thorpe A."/>
            <person name="Tracey A."/>
            <person name="Tromans A."/>
            <person name="Thomas D.W."/>
            <person name="Wall M."/>
            <person name="Wallis J.M."/>
            <person name="West A.P."/>
            <person name="Whitehead S.L."/>
            <person name="Willey D.L."/>
            <person name="Williams S.A."/>
            <person name="Wilming L."/>
            <person name="Wray P.W."/>
            <person name="Young L."/>
            <person name="Ashurst J.L."/>
            <person name="Coulson A."/>
            <person name="Blocker H."/>
            <person name="Durbin R.M."/>
            <person name="Sulston J.E."/>
            <person name="Hubbard T."/>
            <person name="Jackson M.J."/>
            <person name="Bentley D.R."/>
            <person name="Beck S."/>
            <person name="Rogers J."/>
            <person name="Dunham I."/>
        </authorList>
    </citation>
    <scope>NUCLEOTIDE SEQUENCE [LARGE SCALE GENOMIC DNA]</scope>
</reference>
<reference key="5">
    <citation type="submission" date="2005-07" db="EMBL/GenBank/DDBJ databases">
        <authorList>
            <person name="Mural R.J."/>
            <person name="Istrail S."/>
            <person name="Sutton G.G."/>
            <person name="Florea L."/>
            <person name="Halpern A.L."/>
            <person name="Mobarry C.M."/>
            <person name="Lippert R."/>
            <person name="Walenz B."/>
            <person name="Shatkay H."/>
            <person name="Dew I."/>
            <person name="Miller J.R."/>
            <person name="Flanigan M.J."/>
            <person name="Edwards N.J."/>
            <person name="Bolanos R."/>
            <person name="Fasulo D."/>
            <person name="Halldorsson B.V."/>
            <person name="Hannenhalli S."/>
            <person name="Turner R."/>
            <person name="Yooseph S."/>
            <person name="Lu F."/>
            <person name="Nusskern D.R."/>
            <person name="Shue B.C."/>
            <person name="Zheng X.H."/>
            <person name="Zhong F."/>
            <person name="Delcher A.L."/>
            <person name="Huson D.H."/>
            <person name="Kravitz S.A."/>
            <person name="Mouchard L."/>
            <person name="Reinert K."/>
            <person name="Remington K.A."/>
            <person name="Clark A.G."/>
            <person name="Waterman M.S."/>
            <person name="Eichler E.E."/>
            <person name="Adams M.D."/>
            <person name="Hunkapiller M.W."/>
            <person name="Myers E.W."/>
            <person name="Venter J.C."/>
        </authorList>
    </citation>
    <scope>NUCLEOTIDE SEQUENCE [LARGE SCALE GENOMIC DNA]</scope>
</reference>
<reference key="6">
    <citation type="journal article" date="1998" name="Nat. Genet.">
        <title>Mutation of the gene encoding human TTF-2 associated with thyroid agenesis, cleft palate and choanal atresia.</title>
        <authorList>
            <person name="Clifton-Bligh R.J."/>
            <person name="Wentworth J.M."/>
            <person name="Heinz P."/>
            <person name="Crisp M.S."/>
            <person name="John R."/>
            <person name="Lazarus J.H."/>
            <person name="Ludgate M."/>
            <person name="Chatterjee V.K."/>
        </authorList>
    </citation>
    <scope>FUNCTION</scope>
    <scope>INVOLVEMENT IN BAMLAZ</scope>
    <scope>VARIANT BAMLAZ VAL-65</scope>
    <scope>CHARACTERIZATION OF VARIANT BAMLAZ VAL-65</scope>
</reference>
<reference key="7">
    <citation type="journal article" date="2011" name="Hum. Mol. Genet.">
        <title>MSX1 and TGF-beta3 are novel target genes functionally regulated by FOXE1.</title>
        <authorList>
            <person name="Venza I."/>
            <person name="Visalli M."/>
            <person name="Parrillo L."/>
            <person name="De Felice M."/>
            <person name="Teti D."/>
            <person name="Venza M."/>
        </authorList>
    </citation>
    <scope>FUNCTION</scope>
    <scope>SUBCELLULAR LOCATION</scope>
    <scope>CHARACTERIZATION OF VARIANTS BAMLAZ ASN-57 AND VAL-65</scope>
    <scope>CHARACTERIZATION OF VARIANTS CONGENITAL HYPOTHYROIDISM CYS-102 AND SER-137</scope>
</reference>
<reference key="8">
    <citation type="journal article" date="2015" name="Endocrine">
        <title>Identification of a novel germline FOXE1 variant in patients with familial non-medullary thyroid carcinoma (FNMTC).</title>
        <authorList>
            <person name="Pereira J.S."/>
            <person name="da Silva J.G."/>
            <person name="Tomaz R.A."/>
            <person name="Pinto A.E."/>
            <person name="Bugalho M.J."/>
            <person name="Leite V."/>
            <person name="Cavaco B.M."/>
        </authorList>
    </citation>
    <scope>FUNCTION</scope>
    <scope>INVOLVEMENT IN NMTC4</scope>
    <scope>VARIANT NMTC4 GLY-248</scope>
    <scope>CHARACTERIZATION OF VARIANT NMTC4 GLY-248</scope>
</reference>
<reference key="9">
    <citation type="journal article" date="2002" name="Hum. Mol. Genet.">
        <title>A novel loss-of-function mutation in TTF-2 is associated with congenital hypothyroidism, thyroid agenesis and cleft palate.</title>
        <authorList>
            <person name="Castanet M."/>
            <person name="Park S.M."/>
            <person name="Smith A."/>
            <person name="Bost M."/>
            <person name="Leger J."/>
            <person name="Lyonnet S."/>
            <person name="Pelet A."/>
            <person name="Czernichow P."/>
            <person name="Chatterjee K."/>
            <person name="Polak M."/>
        </authorList>
    </citation>
    <scope>VARIANT BAMLAZ ASN-57</scope>
    <scope>CHARACTERIZATION OF VARIANT BAMLAZ ASN-57 AND VAL-65</scope>
    <scope>FUNCTION</scope>
</reference>
<reference key="10">
    <citation type="journal article" date="2006" name="J. Clin. Endocrinol. Metab.">
        <title>A novel missense mutation in human TTF-2 (FKHL15) gene associated with congenital hypothyroidism but not athyreosis.</title>
        <authorList>
            <person name="Baris I."/>
            <person name="Arisoy A.E."/>
            <person name="Smith A."/>
            <person name="Agostini M."/>
            <person name="Mitchell C.S."/>
            <person name="Park S.M."/>
            <person name="Halefoglu A.M."/>
            <person name="Zengin E."/>
            <person name="Chatterjee V.K."/>
            <person name="Battaloglu E."/>
        </authorList>
    </citation>
    <scope>VARIANT CONGENITAL HYPOTHYROIDISM CYS-102</scope>
    <scope>CHARACTERIZATION OF VARIANT CONGENITAL HYPOTHYROIDISM CYS-102</scope>
    <scope>FUNCTION</scope>
</reference>
<reference key="11">
    <citation type="journal article" date="2010" name="Biochem. Genet.">
        <title>Characterization of mutations in the FOXE1 gene in a cohort of unrelated Malaysian patients with congenital hypothyroidism and thyroid dysgenesis.</title>
        <authorList>
            <person name="Kang I.N."/>
            <person name="Musa M."/>
            <person name="Harun F."/>
            <person name="Junit S.M."/>
        </authorList>
    </citation>
    <scope>VARIANT CONGENITAL HYPOTHYROIDISM ASP-132</scope>
    <scope>CHARACTERIZATION OF VARIANT CONGENITAL HYPOTHYROIDISM ASP-132</scope>
    <scope>FUNCTION</scope>
</reference>
<reference key="12">
    <citation type="journal article" date="2010" name="J. Clin. Endocrinol. Metab.">
        <title>Maternal isodisomy for chromosome 9 causing homozygosity for a novel FOXE1 mutation in syndromic congenital hypothyroidism.</title>
        <authorList>
            <person name="Castanet M."/>
            <person name="Mallya U."/>
            <person name="Agostini M."/>
            <person name="Schoenmakers E."/>
            <person name="Mitchell C."/>
            <person name="Demuth S."/>
            <person name="Raymond F.L."/>
            <person name="Schwabe J."/>
            <person name="Gurnell M."/>
            <person name="Chatterjee V.K."/>
        </authorList>
    </citation>
    <scope>VARIANT CONGENITAL HYPOTHYROIDISM SER-137</scope>
    <scope>CHARACTERIZATION OF VARIANT CONGENITAL HYPOTHYROIDISM SER-137</scope>
    <scope>FUNCTION</scope>
</reference>
<reference key="13">
    <citation type="journal article" date="2014" name="Thyroid">
        <title>A novel FOXE1 mutation (R73S) in Bamforth-Lazarus syndrome causing increased thyroidal gene expression.</title>
        <authorList>
            <person name="Carre A."/>
            <person name="Hamza R.T."/>
            <person name="Kariyawasam D."/>
            <person name="Guillot L."/>
            <person name="Teissier R."/>
            <person name="Tron E."/>
            <person name="Castanet M."/>
            <person name="Dupuy C."/>
            <person name="El Kholy M."/>
            <person name="Polak M."/>
        </authorList>
    </citation>
    <scope>VARIANT BAMLAZ SER-73</scope>
    <scope>CHARACTERIZATION OF VARIANT BAMLAZ SER-73</scope>
    <scope>FUNCTION</scope>
</reference>
<proteinExistence type="evidence at protein level"/>
<sequence length="373" mass="38076">MTAESGPPPPQPEVLATVKEERGETAAGAGVPGEATGRGAGGRRRKRPLQRGKPPYSYIALIAMAIAHAPERRLTLGGIYKFITERFPFYRDNPKKWQNSIRHNLTLNDCFLKIPREAGRPGKGNYWALDPNAEDMFESGSFLRRRKRFKRSDLSTYPAYMHDAAAAAAAAAAAAAAAAIFPGAVPAARPPYPGAVYAGYAPPSLAAPPPVYYPAASPGPCRVFGLVPERPLSPELGPAPSGPGGSCAFASAGAPATTTGYQPAGCTGARPANPSAYAAAYAGPDGAYPQGAGSAIFAAAGRLAGPASPPAGGSSGGVETTVDFYGRTSPGQFGALGACYNPGGQLGGASAGAYHARHAAAYPGGIDRFVSAM</sequence>
<keyword id="KW-0984">Congenital hypothyroidism</keyword>
<keyword id="KW-0225">Disease variant</keyword>
<keyword id="KW-0238">DNA-binding</keyword>
<keyword id="KW-0539">Nucleus</keyword>
<keyword id="KW-0597">Phosphoprotein</keyword>
<keyword id="KW-1267">Proteomics identification</keyword>
<keyword id="KW-1185">Reference proteome</keyword>
<keyword id="KW-0804">Transcription</keyword>
<keyword id="KW-0805">Transcription regulation</keyword>